<proteinExistence type="inferred from homology"/>
<reference key="1">
    <citation type="journal article" date="2009" name="PLoS Genet.">
        <title>Organised genome dynamics in the Escherichia coli species results in highly diverse adaptive paths.</title>
        <authorList>
            <person name="Touchon M."/>
            <person name="Hoede C."/>
            <person name="Tenaillon O."/>
            <person name="Barbe V."/>
            <person name="Baeriswyl S."/>
            <person name="Bidet P."/>
            <person name="Bingen E."/>
            <person name="Bonacorsi S."/>
            <person name="Bouchier C."/>
            <person name="Bouvet O."/>
            <person name="Calteau A."/>
            <person name="Chiapello H."/>
            <person name="Clermont O."/>
            <person name="Cruveiller S."/>
            <person name="Danchin A."/>
            <person name="Diard M."/>
            <person name="Dossat C."/>
            <person name="Karoui M.E."/>
            <person name="Frapy E."/>
            <person name="Garry L."/>
            <person name="Ghigo J.M."/>
            <person name="Gilles A.M."/>
            <person name="Johnson J."/>
            <person name="Le Bouguenec C."/>
            <person name="Lescat M."/>
            <person name="Mangenot S."/>
            <person name="Martinez-Jehanne V."/>
            <person name="Matic I."/>
            <person name="Nassif X."/>
            <person name="Oztas S."/>
            <person name="Petit M.A."/>
            <person name="Pichon C."/>
            <person name="Rouy Z."/>
            <person name="Ruf C.S."/>
            <person name="Schneider D."/>
            <person name="Tourret J."/>
            <person name="Vacherie B."/>
            <person name="Vallenet D."/>
            <person name="Medigue C."/>
            <person name="Rocha E.P.C."/>
            <person name="Denamur E."/>
        </authorList>
    </citation>
    <scope>NUCLEOTIDE SEQUENCE [LARGE SCALE GENOMIC DNA]</scope>
    <source>
        <strain>ATCC 35469 / DSM 13698 / BCRC 15582 / CCUG 18766 / IAM 14443 / JCM 21226 / LMG 7866 / NBRC 102419 / NCTC 12128 / CDC 0568-73</strain>
    </source>
</reference>
<dbReference type="EC" id="5.3.1.6" evidence="1"/>
<dbReference type="EMBL" id="CU928158">
    <property type="protein sequence ID" value="CAQ90345.1"/>
    <property type="molecule type" value="Genomic_DNA"/>
</dbReference>
<dbReference type="RefSeq" id="WP_000189736.1">
    <property type="nucleotide sequence ID" value="NC_011740.1"/>
</dbReference>
<dbReference type="SMR" id="B7LPC8"/>
<dbReference type="GeneID" id="75060528"/>
<dbReference type="KEGG" id="efe:EFER_2851"/>
<dbReference type="HOGENOM" id="CLU_056590_1_1_6"/>
<dbReference type="OrthoDB" id="5870696at2"/>
<dbReference type="UniPathway" id="UPA00115">
    <property type="reaction ID" value="UER00412"/>
</dbReference>
<dbReference type="Proteomes" id="UP000000745">
    <property type="component" value="Chromosome"/>
</dbReference>
<dbReference type="GO" id="GO:0005829">
    <property type="term" value="C:cytosol"/>
    <property type="evidence" value="ECO:0007669"/>
    <property type="project" value="TreeGrafter"/>
</dbReference>
<dbReference type="GO" id="GO:0004751">
    <property type="term" value="F:ribose-5-phosphate isomerase activity"/>
    <property type="evidence" value="ECO:0007669"/>
    <property type="project" value="UniProtKB-UniRule"/>
</dbReference>
<dbReference type="GO" id="GO:0006014">
    <property type="term" value="P:D-ribose metabolic process"/>
    <property type="evidence" value="ECO:0007669"/>
    <property type="project" value="TreeGrafter"/>
</dbReference>
<dbReference type="GO" id="GO:0009052">
    <property type="term" value="P:pentose-phosphate shunt, non-oxidative branch"/>
    <property type="evidence" value="ECO:0007669"/>
    <property type="project" value="UniProtKB-UniRule"/>
</dbReference>
<dbReference type="CDD" id="cd01398">
    <property type="entry name" value="RPI_A"/>
    <property type="match status" value="1"/>
</dbReference>
<dbReference type="FunFam" id="3.30.70.260:FF:000004">
    <property type="entry name" value="Ribose-5-phosphate isomerase A"/>
    <property type="match status" value="1"/>
</dbReference>
<dbReference type="FunFam" id="3.40.50.1360:FF:000001">
    <property type="entry name" value="Ribose-5-phosphate isomerase A"/>
    <property type="match status" value="1"/>
</dbReference>
<dbReference type="Gene3D" id="3.30.70.260">
    <property type="match status" value="1"/>
</dbReference>
<dbReference type="Gene3D" id="3.40.50.1360">
    <property type="match status" value="1"/>
</dbReference>
<dbReference type="HAMAP" id="MF_00170">
    <property type="entry name" value="Rib_5P_isom_A"/>
    <property type="match status" value="1"/>
</dbReference>
<dbReference type="InterPro" id="IPR037171">
    <property type="entry name" value="NagB/RpiA_transferase-like"/>
</dbReference>
<dbReference type="InterPro" id="IPR020672">
    <property type="entry name" value="Ribose5P_isomerase_typA_subgr"/>
</dbReference>
<dbReference type="InterPro" id="IPR004788">
    <property type="entry name" value="Ribose5P_isomerase_type_A"/>
</dbReference>
<dbReference type="NCBIfam" id="NF001924">
    <property type="entry name" value="PRK00702.1"/>
    <property type="match status" value="1"/>
</dbReference>
<dbReference type="NCBIfam" id="TIGR00021">
    <property type="entry name" value="rpiA"/>
    <property type="match status" value="1"/>
</dbReference>
<dbReference type="PANTHER" id="PTHR11934">
    <property type="entry name" value="RIBOSE-5-PHOSPHATE ISOMERASE"/>
    <property type="match status" value="1"/>
</dbReference>
<dbReference type="PANTHER" id="PTHR11934:SF0">
    <property type="entry name" value="RIBOSE-5-PHOSPHATE ISOMERASE"/>
    <property type="match status" value="1"/>
</dbReference>
<dbReference type="Pfam" id="PF06026">
    <property type="entry name" value="Rib_5-P_isom_A"/>
    <property type="match status" value="1"/>
</dbReference>
<dbReference type="SUPFAM" id="SSF75445">
    <property type="entry name" value="D-ribose-5-phosphate isomerase (RpiA), lid domain"/>
    <property type="match status" value="1"/>
</dbReference>
<dbReference type="SUPFAM" id="SSF100950">
    <property type="entry name" value="NagB/RpiA/CoA transferase-like"/>
    <property type="match status" value="1"/>
</dbReference>
<organism>
    <name type="scientific">Escherichia fergusonii (strain ATCC 35469 / DSM 13698 / CCUG 18766 / IAM 14443 / JCM 21226 / LMG 7866 / NBRC 102419 / NCTC 12128 / CDC 0568-73)</name>
    <dbReference type="NCBI Taxonomy" id="585054"/>
    <lineage>
        <taxon>Bacteria</taxon>
        <taxon>Pseudomonadati</taxon>
        <taxon>Pseudomonadota</taxon>
        <taxon>Gammaproteobacteria</taxon>
        <taxon>Enterobacterales</taxon>
        <taxon>Enterobacteriaceae</taxon>
        <taxon>Escherichia</taxon>
    </lineage>
</organism>
<keyword id="KW-0413">Isomerase</keyword>
<comment type="function">
    <text evidence="1">Catalyzes the reversible conversion of ribose-5-phosphate to ribulose 5-phosphate.</text>
</comment>
<comment type="catalytic activity">
    <reaction evidence="1">
        <text>aldehydo-D-ribose 5-phosphate = D-ribulose 5-phosphate</text>
        <dbReference type="Rhea" id="RHEA:14657"/>
        <dbReference type="ChEBI" id="CHEBI:58121"/>
        <dbReference type="ChEBI" id="CHEBI:58273"/>
        <dbReference type="EC" id="5.3.1.6"/>
    </reaction>
</comment>
<comment type="pathway">
    <text evidence="1">Carbohydrate degradation; pentose phosphate pathway; D-ribose 5-phosphate from D-ribulose 5-phosphate (non-oxidative stage): step 1/1.</text>
</comment>
<comment type="subunit">
    <text evidence="1">Homodimer.</text>
</comment>
<comment type="similarity">
    <text evidence="1">Belongs to the ribose 5-phosphate isomerase family.</text>
</comment>
<feature type="chain" id="PRO_1000194710" description="Ribose-5-phosphate isomerase A">
    <location>
        <begin position="1"/>
        <end position="219"/>
    </location>
</feature>
<feature type="active site" description="Proton acceptor" evidence="1">
    <location>
        <position position="103"/>
    </location>
</feature>
<feature type="binding site" evidence="1">
    <location>
        <begin position="28"/>
        <end position="31"/>
    </location>
    <ligand>
        <name>substrate</name>
    </ligand>
</feature>
<feature type="binding site" evidence="1">
    <location>
        <begin position="81"/>
        <end position="84"/>
    </location>
    <ligand>
        <name>substrate</name>
    </ligand>
</feature>
<feature type="binding site" evidence="1">
    <location>
        <begin position="94"/>
        <end position="97"/>
    </location>
    <ligand>
        <name>substrate</name>
    </ligand>
</feature>
<feature type="binding site" evidence="1">
    <location>
        <position position="121"/>
    </location>
    <ligand>
        <name>substrate</name>
    </ligand>
</feature>
<sequence length="219" mass="22855">MTQDELKKAVGWAALQYVQPGTIVGVGTGSTAAHFIDALGTMKDQIEGAVSSSDASTEKLKSLGITVFDLNDVDSLGIYVDGADEINGHMQMIKGGGAALTREKIIASVAKKFICIADASKQVDILGKFPLPVEVIPMARSAVARQLVKLGGRPEYRQGVITDNGNVILDVHGMEILDPVAMENAINAIPGVVTVGLFANRGADVALIGTAEGVKTIVK</sequence>
<protein>
    <recommendedName>
        <fullName evidence="1">Ribose-5-phosphate isomerase A</fullName>
        <ecNumber evidence="1">5.3.1.6</ecNumber>
    </recommendedName>
    <alternativeName>
        <fullName evidence="1">Phosphoriboisomerase A</fullName>
        <shortName evidence="1">PRI</shortName>
    </alternativeName>
</protein>
<gene>
    <name evidence="1" type="primary">rpiA</name>
    <name type="ordered locus">EFER_2851</name>
</gene>
<name>RPIA_ESCF3</name>
<evidence type="ECO:0000255" key="1">
    <source>
        <dbReference type="HAMAP-Rule" id="MF_00170"/>
    </source>
</evidence>
<accession>B7LPC8</accession>